<keyword id="KW-0133">Cell shape</keyword>
<keyword id="KW-0961">Cell wall biogenesis/degradation</keyword>
<keyword id="KW-0413">Isomerase</keyword>
<keyword id="KW-0573">Peptidoglycan synthesis</keyword>
<evidence type="ECO:0000255" key="1">
    <source>
        <dbReference type="HAMAP-Rule" id="MF_00258"/>
    </source>
</evidence>
<dbReference type="EC" id="5.1.1.3" evidence="1"/>
<dbReference type="EMBL" id="CP000517">
    <property type="protein sequence ID" value="ABX26657.1"/>
    <property type="molecule type" value="Genomic_DNA"/>
</dbReference>
<dbReference type="RefSeq" id="WP_003627745.1">
    <property type="nucleotide sequence ID" value="NC_010080.1"/>
</dbReference>
<dbReference type="SMR" id="A8YTR6"/>
<dbReference type="KEGG" id="lhe:lhv_0449"/>
<dbReference type="eggNOG" id="COG0796">
    <property type="taxonomic scope" value="Bacteria"/>
</dbReference>
<dbReference type="HOGENOM" id="CLU_052344_0_2_9"/>
<dbReference type="UniPathway" id="UPA00219"/>
<dbReference type="Proteomes" id="UP000000790">
    <property type="component" value="Chromosome"/>
</dbReference>
<dbReference type="GO" id="GO:0008881">
    <property type="term" value="F:glutamate racemase activity"/>
    <property type="evidence" value="ECO:0007669"/>
    <property type="project" value="UniProtKB-UniRule"/>
</dbReference>
<dbReference type="GO" id="GO:0071555">
    <property type="term" value="P:cell wall organization"/>
    <property type="evidence" value="ECO:0007669"/>
    <property type="project" value="UniProtKB-KW"/>
</dbReference>
<dbReference type="GO" id="GO:0009252">
    <property type="term" value="P:peptidoglycan biosynthetic process"/>
    <property type="evidence" value="ECO:0007669"/>
    <property type="project" value="UniProtKB-UniRule"/>
</dbReference>
<dbReference type="GO" id="GO:0008360">
    <property type="term" value="P:regulation of cell shape"/>
    <property type="evidence" value="ECO:0007669"/>
    <property type="project" value="UniProtKB-KW"/>
</dbReference>
<dbReference type="FunFam" id="3.40.50.1860:FF:000001">
    <property type="entry name" value="Glutamate racemase"/>
    <property type="match status" value="1"/>
</dbReference>
<dbReference type="Gene3D" id="3.40.50.1860">
    <property type="match status" value="2"/>
</dbReference>
<dbReference type="HAMAP" id="MF_00258">
    <property type="entry name" value="Glu_racemase"/>
    <property type="match status" value="1"/>
</dbReference>
<dbReference type="InterPro" id="IPR015942">
    <property type="entry name" value="Asp/Glu/hydantoin_racemase"/>
</dbReference>
<dbReference type="InterPro" id="IPR001920">
    <property type="entry name" value="Asp/Glu_race"/>
</dbReference>
<dbReference type="InterPro" id="IPR004391">
    <property type="entry name" value="Glu_race"/>
</dbReference>
<dbReference type="NCBIfam" id="TIGR00067">
    <property type="entry name" value="glut_race"/>
    <property type="match status" value="1"/>
</dbReference>
<dbReference type="PANTHER" id="PTHR21198">
    <property type="entry name" value="GLUTAMATE RACEMASE"/>
    <property type="match status" value="1"/>
</dbReference>
<dbReference type="PANTHER" id="PTHR21198:SF2">
    <property type="entry name" value="GLUTAMATE RACEMASE"/>
    <property type="match status" value="1"/>
</dbReference>
<dbReference type="Pfam" id="PF01177">
    <property type="entry name" value="Asp_Glu_race"/>
    <property type="match status" value="1"/>
</dbReference>
<dbReference type="SUPFAM" id="SSF53681">
    <property type="entry name" value="Aspartate/glutamate racemase"/>
    <property type="match status" value="2"/>
</dbReference>
<gene>
    <name evidence="1" type="primary">murI</name>
    <name type="ordered locus">lhv_0449</name>
</gene>
<proteinExistence type="inferred from homology"/>
<name>MURI_LACH4</name>
<sequence>MDNRPIGLLDSGVGGFTVVKKVIEKLPHESTVFIGDSANMPYGDKSREQIIELTRRSVKFLLQKKVKLIIFACNTATAVAMPTLQNEVEQQIIGVIQSGSLAAARTTKNKKVAVAATPVTINSHAYQKEIKFRDPDIKVMEVAAPELAPLIESQKDYDTNLAAVKRSIAPLKDQDFDTFVLGCTHYPLIQNEFVEALGDKIQIVDPADQVAQYTFNVMRRDGLFSSFDQAGKHEYYTTGDPDKFSEMGRRFLGQADLTSHQVDTRNL</sequence>
<accession>A8YTR6</accession>
<feature type="chain" id="PRO_1000071882" description="Glutamate racemase">
    <location>
        <begin position="1"/>
        <end position="267"/>
    </location>
</feature>
<feature type="active site" description="Proton donor/acceptor" evidence="1">
    <location>
        <position position="73"/>
    </location>
</feature>
<feature type="active site" description="Proton donor/acceptor" evidence="1">
    <location>
        <position position="183"/>
    </location>
</feature>
<feature type="binding site" evidence="1">
    <location>
        <begin position="10"/>
        <end position="11"/>
    </location>
    <ligand>
        <name>substrate</name>
    </ligand>
</feature>
<feature type="binding site" evidence="1">
    <location>
        <begin position="42"/>
        <end position="43"/>
    </location>
    <ligand>
        <name>substrate</name>
    </ligand>
</feature>
<feature type="binding site" evidence="1">
    <location>
        <begin position="74"/>
        <end position="75"/>
    </location>
    <ligand>
        <name>substrate</name>
    </ligand>
</feature>
<feature type="binding site" evidence="1">
    <location>
        <begin position="184"/>
        <end position="185"/>
    </location>
    <ligand>
        <name>substrate</name>
    </ligand>
</feature>
<reference key="1">
    <citation type="journal article" date="2008" name="J. Bacteriol.">
        <title>Genome sequence of Lactobacillus helveticus: an organism distinguished by selective gene loss and IS element expansion.</title>
        <authorList>
            <person name="Callanan M."/>
            <person name="Kaleta P."/>
            <person name="O'Callaghan J."/>
            <person name="O'Sullivan O."/>
            <person name="Jordan K."/>
            <person name="McAuliffe O."/>
            <person name="Sangrador-Vegas A."/>
            <person name="Slattery L."/>
            <person name="Fitzgerald G.F."/>
            <person name="Beresford T."/>
            <person name="Ross R.P."/>
        </authorList>
    </citation>
    <scope>NUCLEOTIDE SEQUENCE [LARGE SCALE GENOMIC DNA]</scope>
    <source>
        <strain>DPC 4571</strain>
    </source>
</reference>
<organism>
    <name type="scientific">Lactobacillus helveticus (strain DPC 4571)</name>
    <dbReference type="NCBI Taxonomy" id="405566"/>
    <lineage>
        <taxon>Bacteria</taxon>
        <taxon>Bacillati</taxon>
        <taxon>Bacillota</taxon>
        <taxon>Bacilli</taxon>
        <taxon>Lactobacillales</taxon>
        <taxon>Lactobacillaceae</taxon>
        <taxon>Lactobacillus</taxon>
    </lineage>
</organism>
<protein>
    <recommendedName>
        <fullName evidence="1">Glutamate racemase</fullName>
        <ecNumber evidence="1">5.1.1.3</ecNumber>
    </recommendedName>
</protein>
<comment type="function">
    <text evidence="1">Provides the (R)-glutamate required for cell wall biosynthesis.</text>
</comment>
<comment type="catalytic activity">
    <reaction evidence="1">
        <text>L-glutamate = D-glutamate</text>
        <dbReference type="Rhea" id="RHEA:12813"/>
        <dbReference type="ChEBI" id="CHEBI:29985"/>
        <dbReference type="ChEBI" id="CHEBI:29986"/>
        <dbReference type="EC" id="5.1.1.3"/>
    </reaction>
</comment>
<comment type="pathway">
    <text evidence="1">Cell wall biogenesis; peptidoglycan biosynthesis.</text>
</comment>
<comment type="similarity">
    <text evidence="1">Belongs to the aspartate/glutamate racemases family.</text>
</comment>